<protein>
    <recommendedName>
        <fullName evidence="1">Leucine--tRNA ligase</fullName>
        <ecNumber evidence="1">6.1.1.4</ecNumber>
    </recommendedName>
    <alternativeName>
        <fullName evidence="1">Leucyl-tRNA synthetase</fullName>
        <shortName evidence="1">LeuRS</shortName>
    </alternativeName>
</protein>
<comment type="catalytic activity">
    <reaction evidence="1">
        <text>tRNA(Leu) + L-leucine + ATP = L-leucyl-tRNA(Leu) + AMP + diphosphate</text>
        <dbReference type="Rhea" id="RHEA:11688"/>
        <dbReference type="Rhea" id="RHEA-COMP:9613"/>
        <dbReference type="Rhea" id="RHEA-COMP:9622"/>
        <dbReference type="ChEBI" id="CHEBI:30616"/>
        <dbReference type="ChEBI" id="CHEBI:33019"/>
        <dbReference type="ChEBI" id="CHEBI:57427"/>
        <dbReference type="ChEBI" id="CHEBI:78442"/>
        <dbReference type="ChEBI" id="CHEBI:78494"/>
        <dbReference type="ChEBI" id="CHEBI:456215"/>
        <dbReference type="EC" id="6.1.1.4"/>
    </reaction>
</comment>
<comment type="subcellular location">
    <subcellularLocation>
        <location evidence="1">Cytoplasm</location>
    </subcellularLocation>
</comment>
<comment type="similarity">
    <text evidence="1">Belongs to the class-I aminoacyl-tRNA synthetase family.</text>
</comment>
<comment type="sequence caution" evidence="2">
    <conflict type="erroneous initiation">
        <sequence resource="EMBL-CDS" id="AAF94118"/>
    </conflict>
</comment>
<feature type="chain" id="PRO_0000152113" description="Leucine--tRNA ligase">
    <location>
        <begin position="1"/>
        <end position="858"/>
    </location>
</feature>
<feature type="short sequence motif" description="'HIGH' region">
    <location>
        <begin position="42"/>
        <end position="52"/>
    </location>
</feature>
<feature type="short sequence motif" description="'KMSKS' region">
    <location>
        <begin position="618"/>
        <end position="622"/>
    </location>
</feature>
<feature type="binding site" evidence="1">
    <location>
        <position position="621"/>
    </location>
    <ligand>
        <name>ATP</name>
        <dbReference type="ChEBI" id="CHEBI:30616"/>
    </ligand>
</feature>
<sequence>MQEQYNPQDIEHKVQQHWDNNKTFVVSEDPNKEKFYCLSMFPYPSGRLHMGHVRNYTIGDVVSRFQRLQGKNVLQPIGWDAFGLPAENAAVKNNTAPAPWTYENIEYMKNQLKLLGFGYDWNREFATCRPEYYRWEQEFFTKLFAKGLVYKKTSSVNWCPNDQTVLANEQVEDGCCWRCDTPVEQKEIPQWFIKITAYAQELLDDLDNLDGWPEMVKTMQRNWIGRSEGVELKFAVKGENTDLEVYTTRPDTLMGVTYVGIAAGHPLATKAAANNPALAAFIDECKNTKVAEAEIATMEKKGMATGLTAIHPLNGREVPIYIANFVLMDYGTGAVMAVPAHDQRDFEFATKYGLDIIPVIKPADGSELDVSEAAYTEKGVLFASGEFDGLDFQAAFNAIAAKLEAEGKGKKTVNFRLRDWGVSRQRYWGAPIPMVTTEDGQVHPVPADQLPVILPEDVVMDGVTSPIKADKEWAKTTFNGEPALRETDTFDTFMESSWYYARYCSPQADDILDPEKANYWLPVDQYIGGIEHACMHLLYSRFFHKLLRDAGYVKSDEPFKKLLCQGMVLADAFYYTNDKGGKEWVSPTEVKVERDGKGRIVSAVDATGRQVEHSGMIKMSKSKNNGIDPQEMVDKYGADTVRLFMMFASPADMTLEWQESGVEGANRFLRRVWKLVREHTELGQAPALDASALNADQKALRRDVHKTIAKVTDDVARRQTFNTAIAAIMELMNKLTKAPMTEAQDRAILDEALKAITLMLYPITPHICFEMWVALGQSNIDTASWPTYDEAALVEDEKLIVLQVNGKLRGKLTVAADATQQQVEALGMQDENVQKFIDGLTVRKVIYVPGKLLNIVAN</sequence>
<proteinExistence type="inferred from homology"/>
<gene>
    <name evidence="1" type="primary">leuS</name>
    <name type="ordered locus">VC_0956</name>
</gene>
<organism>
    <name type="scientific">Vibrio cholerae serotype O1 (strain ATCC 39315 / El Tor Inaba N16961)</name>
    <dbReference type="NCBI Taxonomy" id="243277"/>
    <lineage>
        <taxon>Bacteria</taxon>
        <taxon>Pseudomonadati</taxon>
        <taxon>Pseudomonadota</taxon>
        <taxon>Gammaproteobacteria</taxon>
        <taxon>Vibrionales</taxon>
        <taxon>Vibrionaceae</taxon>
        <taxon>Vibrio</taxon>
    </lineage>
</organism>
<accession>Q9KTE6</accession>
<name>SYL_VIBCH</name>
<dbReference type="EC" id="6.1.1.4" evidence="1"/>
<dbReference type="EMBL" id="AE003852">
    <property type="protein sequence ID" value="AAF94118.1"/>
    <property type="status" value="ALT_INIT"/>
    <property type="molecule type" value="Genomic_DNA"/>
</dbReference>
<dbReference type="PIR" id="G82260">
    <property type="entry name" value="G82260"/>
</dbReference>
<dbReference type="RefSeq" id="NP_230603.2">
    <property type="nucleotide sequence ID" value="NC_002505.1"/>
</dbReference>
<dbReference type="RefSeq" id="WP_001157864.1">
    <property type="nucleotide sequence ID" value="NZ_LT906614.1"/>
</dbReference>
<dbReference type="SMR" id="Q9KTE6"/>
<dbReference type="STRING" id="243277.VC_0956"/>
<dbReference type="EnsemblBacteria" id="AAF94118">
    <property type="protein sequence ID" value="AAF94118"/>
    <property type="gene ID" value="VC_0956"/>
</dbReference>
<dbReference type="GeneID" id="88784634"/>
<dbReference type="KEGG" id="vch:VC_0956"/>
<dbReference type="PATRIC" id="fig|243277.26.peg.910"/>
<dbReference type="eggNOG" id="COG0495">
    <property type="taxonomic scope" value="Bacteria"/>
</dbReference>
<dbReference type="HOGENOM" id="CLU_004427_0_0_6"/>
<dbReference type="Proteomes" id="UP000000584">
    <property type="component" value="Chromosome 1"/>
</dbReference>
<dbReference type="GO" id="GO:0005829">
    <property type="term" value="C:cytosol"/>
    <property type="evidence" value="ECO:0000318"/>
    <property type="project" value="GO_Central"/>
</dbReference>
<dbReference type="GO" id="GO:0002161">
    <property type="term" value="F:aminoacyl-tRNA deacylase activity"/>
    <property type="evidence" value="ECO:0007669"/>
    <property type="project" value="InterPro"/>
</dbReference>
<dbReference type="GO" id="GO:0005524">
    <property type="term" value="F:ATP binding"/>
    <property type="evidence" value="ECO:0007669"/>
    <property type="project" value="UniProtKB-UniRule"/>
</dbReference>
<dbReference type="GO" id="GO:0004823">
    <property type="term" value="F:leucine-tRNA ligase activity"/>
    <property type="evidence" value="ECO:0000318"/>
    <property type="project" value="GO_Central"/>
</dbReference>
<dbReference type="GO" id="GO:0006429">
    <property type="term" value="P:leucyl-tRNA aminoacylation"/>
    <property type="evidence" value="ECO:0000318"/>
    <property type="project" value="GO_Central"/>
</dbReference>
<dbReference type="CDD" id="cd07958">
    <property type="entry name" value="Anticodon_Ia_Leu_BEm"/>
    <property type="match status" value="1"/>
</dbReference>
<dbReference type="CDD" id="cd00812">
    <property type="entry name" value="LeuRS_core"/>
    <property type="match status" value="1"/>
</dbReference>
<dbReference type="FunFam" id="1.10.730.10:FF:000003">
    <property type="entry name" value="Leucine--tRNA ligase"/>
    <property type="match status" value="1"/>
</dbReference>
<dbReference type="FunFam" id="2.20.28.290:FF:000001">
    <property type="entry name" value="Leucine--tRNA ligase"/>
    <property type="match status" value="1"/>
</dbReference>
<dbReference type="FunFam" id="3.10.20.590:FF:000001">
    <property type="entry name" value="Leucine--tRNA ligase"/>
    <property type="match status" value="1"/>
</dbReference>
<dbReference type="FunFam" id="3.40.50.620:FF:000003">
    <property type="entry name" value="Leucine--tRNA ligase"/>
    <property type="match status" value="1"/>
</dbReference>
<dbReference type="FunFam" id="3.40.50.620:FF:000051">
    <property type="entry name" value="Leucine--tRNA ligase"/>
    <property type="match status" value="1"/>
</dbReference>
<dbReference type="FunFam" id="3.90.740.10:FF:000012">
    <property type="entry name" value="Leucine--tRNA ligase"/>
    <property type="match status" value="1"/>
</dbReference>
<dbReference type="Gene3D" id="2.20.28.290">
    <property type="match status" value="1"/>
</dbReference>
<dbReference type="Gene3D" id="3.10.20.590">
    <property type="match status" value="1"/>
</dbReference>
<dbReference type="Gene3D" id="3.40.50.620">
    <property type="entry name" value="HUPs"/>
    <property type="match status" value="2"/>
</dbReference>
<dbReference type="Gene3D" id="1.10.730.10">
    <property type="entry name" value="Isoleucyl-tRNA Synthetase, Domain 1"/>
    <property type="match status" value="2"/>
</dbReference>
<dbReference type="HAMAP" id="MF_00049_B">
    <property type="entry name" value="Leu_tRNA_synth_B"/>
    <property type="match status" value="1"/>
</dbReference>
<dbReference type="InterPro" id="IPR001412">
    <property type="entry name" value="aa-tRNA-synth_I_CS"/>
</dbReference>
<dbReference type="InterPro" id="IPR002300">
    <property type="entry name" value="aa-tRNA-synth_Ia"/>
</dbReference>
<dbReference type="InterPro" id="IPR002302">
    <property type="entry name" value="Leu-tRNA-ligase"/>
</dbReference>
<dbReference type="InterPro" id="IPR025709">
    <property type="entry name" value="Leu_tRNA-synth_edit"/>
</dbReference>
<dbReference type="InterPro" id="IPR013155">
    <property type="entry name" value="M/V/L/I-tRNA-synth_anticd-bd"/>
</dbReference>
<dbReference type="InterPro" id="IPR015413">
    <property type="entry name" value="Methionyl/Leucyl_tRNA_Synth"/>
</dbReference>
<dbReference type="InterPro" id="IPR014729">
    <property type="entry name" value="Rossmann-like_a/b/a_fold"/>
</dbReference>
<dbReference type="InterPro" id="IPR009080">
    <property type="entry name" value="tRNAsynth_Ia_anticodon-bd"/>
</dbReference>
<dbReference type="InterPro" id="IPR009008">
    <property type="entry name" value="Val/Leu/Ile-tRNA-synth_edit"/>
</dbReference>
<dbReference type="NCBIfam" id="TIGR00396">
    <property type="entry name" value="leuS_bact"/>
    <property type="match status" value="1"/>
</dbReference>
<dbReference type="PANTHER" id="PTHR43740:SF2">
    <property type="entry name" value="LEUCINE--TRNA LIGASE, MITOCHONDRIAL"/>
    <property type="match status" value="1"/>
</dbReference>
<dbReference type="PANTHER" id="PTHR43740">
    <property type="entry name" value="LEUCYL-TRNA SYNTHETASE"/>
    <property type="match status" value="1"/>
</dbReference>
<dbReference type="Pfam" id="PF08264">
    <property type="entry name" value="Anticodon_1"/>
    <property type="match status" value="1"/>
</dbReference>
<dbReference type="Pfam" id="PF00133">
    <property type="entry name" value="tRNA-synt_1"/>
    <property type="match status" value="2"/>
</dbReference>
<dbReference type="Pfam" id="PF13603">
    <property type="entry name" value="tRNA-synt_1_2"/>
    <property type="match status" value="1"/>
</dbReference>
<dbReference type="Pfam" id="PF09334">
    <property type="entry name" value="tRNA-synt_1g"/>
    <property type="match status" value="1"/>
</dbReference>
<dbReference type="PRINTS" id="PR00985">
    <property type="entry name" value="TRNASYNTHLEU"/>
</dbReference>
<dbReference type="SUPFAM" id="SSF47323">
    <property type="entry name" value="Anticodon-binding domain of a subclass of class I aminoacyl-tRNA synthetases"/>
    <property type="match status" value="1"/>
</dbReference>
<dbReference type="SUPFAM" id="SSF52374">
    <property type="entry name" value="Nucleotidylyl transferase"/>
    <property type="match status" value="1"/>
</dbReference>
<dbReference type="SUPFAM" id="SSF50677">
    <property type="entry name" value="ValRS/IleRS/LeuRS editing domain"/>
    <property type="match status" value="1"/>
</dbReference>
<dbReference type="PROSITE" id="PS00178">
    <property type="entry name" value="AA_TRNA_LIGASE_I"/>
    <property type="match status" value="1"/>
</dbReference>
<keyword id="KW-0030">Aminoacyl-tRNA synthetase</keyword>
<keyword id="KW-0067">ATP-binding</keyword>
<keyword id="KW-0963">Cytoplasm</keyword>
<keyword id="KW-0436">Ligase</keyword>
<keyword id="KW-0547">Nucleotide-binding</keyword>
<keyword id="KW-0648">Protein biosynthesis</keyword>
<keyword id="KW-1185">Reference proteome</keyword>
<reference key="1">
    <citation type="journal article" date="2000" name="Nature">
        <title>DNA sequence of both chromosomes of the cholera pathogen Vibrio cholerae.</title>
        <authorList>
            <person name="Heidelberg J.F."/>
            <person name="Eisen J.A."/>
            <person name="Nelson W.C."/>
            <person name="Clayton R.A."/>
            <person name="Gwinn M.L."/>
            <person name="Dodson R.J."/>
            <person name="Haft D.H."/>
            <person name="Hickey E.K."/>
            <person name="Peterson J.D."/>
            <person name="Umayam L.A."/>
            <person name="Gill S.R."/>
            <person name="Nelson K.E."/>
            <person name="Read T.D."/>
            <person name="Tettelin H."/>
            <person name="Richardson D.L."/>
            <person name="Ermolaeva M.D."/>
            <person name="Vamathevan J.J."/>
            <person name="Bass S."/>
            <person name="Qin H."/>
            <person name="Dragoi I."/>
            <person name="Sellers P."/>
            <person name="McDonald L.A."/>
            <person name="Utterback T.R."/>
            <person name="Fleischmann R.D."/>
            <person name="Nierman W.C."/>
            <person name="White O."/>
            <person name="Salzberg S.L."/>
            <person name="Smith H.O."/>
            <person name="Colwell R.R."/>
            <person name="Mekalanos J.J."/>
            <person name="Venter J.C."/>
            <person name="Fraser C.M."/>
        </authorList>
    </citation>
    <scope>NUCLEOTIDE SEQUENCE [LARGE SCALE GENOMIC DNA]</scope>
    <source>
        <strain>ATCC 39315 / El Tor Inaba N16961</strain>
    </source>
</reference>
<evidence type="ECO:0000255" key="1">
    <source>
        <dbReference type="HAMAP-Rule" id="MF_00049"/>
    </source>
</evidence>
<evidence type="ECO:0000305" key="2"/>